<name>PAND_CLOAB</name>
<gene>
    <name evidence="1" type="primary">panD</name>
    <name type="ordered locus">CA_C2916</name>
</gene>
<organism>
    <name type="scientific">Clostridium acetobutylicum (strain ATCC 824 / DSM 792 / JCM 1419 / IAM 19013 / LMG 5710 / NBRC 13948 / NRRL B-527 / VKM B-1787 / 2291 / W)</name>
    <dbReference type="NCBI Taxonomy" id="272562"/>
    <lineage>
        <taxon>Bacteria</taxon>
        <taxon>Bacillati</taxon>
        <taxon>Bacillota</taxon>
        <taxon>Clostridia</taxon>
        <taxon>Eubacteriales</taxon>
        <taxon>Clostridiaceae</taxon>
        <taxon>Clostridium</taxon>
    </lineage>
</organism>
<dbReference type="EC" id="4.1.1.11" evidence="1"/>
<dbReference type="EMBL" id="AE001437">
    <property type="protein sequence ID" value="AAK80858.1"/>
    <property type="molecule type" value="Genomic_DNA"/>
</dbReference>
<dbReference type="PIR" id="G97258">
    <property type="entry name" value="G97258"/>
</dbReference>
<dbReference type="RefSeq" id="NP_349518.1">
    <property type="nucleotide sequence ID" value="NC_003030.1"/>
</dbReference>
<dbReference type="RefSeq" id="WP_010966199.1">
    <property type="nucleotide sequence ID" value="NC_003030.1"/>
</dbReference>
<dbReference type="SMR" id="P58285"/>
<dbReference type="STRING" id="272562.CA_C2916"/>
<dbReference type="GeneID" id="44999404"/>
<dbReference type="KEGG" id="cac:CA_C2916"/>
<dbReference type="PATRIC" id="fig|272562.8.peg.3100"/>
<dbReference type="eggNOG" id="COG0853">
    <property type="taxonomic scope" value="Bacteria"/>
</dbReference>
<dbReference type="HOGENOM" id="CLU_115305_2_0_9"/>
<dbReference type="OrthoDB" id="9803983at2"/>
<dbReference type="UniPathway" id="UPA00028">
    <property type="reaction ID" value="UER00002"/>
</dbReference>
<dbReference type="Proteomes" id="UP000000814">
    <property type="component" value="Chromosome"/>
</dbReference>
<dbReference type="GO" id="GO:0005829">
    <property type="term" value="C:cytosol"/>
    <property type="evidence" value="ECO:0007669"/>
    <property type="project" value="TreeGrafter"/>
</dbReference>
<dbReference type="GO" id="GO:0004068">
    <property type="term" value="F:aspartate 1-decarboxylase activity"/>
    <property type="evidence" value="ECO:0007669"/>
    <property type="project" value="UniProtKB-UniRule"/>
</dbReference>
<dbReference type="GO" id="GO:0006523">
    <property type="term" value="P:alanine biosynthetic process"/>
    <property type="evidence" value="ECO:0007669"/>
    <property type="project" value="InterPro"/>
</dbReference>
<dbReference type="GO" id="GO:0015940">
    <property type="term" value="P:pantothenate biosynthetic process"/>
    <property type="evidence" value="ECO:0007669"/>
    <property type="project" value="UniProtKB-UniRule"/>
</dbReference>
<dbReference type="CDD" id="cd06919">
    <property type="entry name" value="Asp_decarbox"/>
    <property type="match status" value="1"/>
</dbReference>
<dbReference type="Gene3D" id="2.40.40.20">
    <property type="match status" value="1"/>
</dbReference>
<dbReference type="HAMAP" id="MF_00446">
    <property type="entry name" value="PanD"/>
    <property type="match status" value="1"/>
</dbReference>
<dbReference type="InterPro" id="IPR009010">
    <property type="entry name" value="Asp_de-COase-like_dom_sf"/>
</dbReference>
<dbReference type="InterPro" id="IPR003190">
    <property type="entry name" value="Asp_decarbox"/>
</dbReference>
<dbReference type="NCBIfam" id="TIGR00223">
    <property type="entry name" value="panD"/>
    <property type="match status" value="1"/>
</dbReference>
<dbReference type="PANTHER" id="PTHR21012">
    <property type="entry name" value="ASPARTATE 1-DECARBOXYLASE"/>
    <property type="match status" value="1"/>
</dbReference>
<dbReference type="PANTHER" id="PTHR21012:SF0">
    <property type="entry name" value="ASPARTATE 1-DECARBOXYLASE"/>
    <property type="match status" value="1"/>
</dbReference>
<dbReference type="Pfam" id="PF02261">
    <property type="entry name" value="Asp_decarbox"/>
    <property type="match status" value="1"/>
</dbReference>
<dbReference type="PIRSF" id="PIRSF006246">
    <property type="entry name" value="Asp_decarbox"/>
    <property type="match status" value="1"/>
</dbReference>
<dbReference type="SUPFAM" id="SSF50692">
    <property type="entry name" value="ADC-like"/>
    <property type="match status" value="1"/>
</dbReference>
<accession>P58285</accession>
<sequence length="127" mass="13888">MHLNMLKSKIHRATVVQADLNYVGSITIDRNLMDKANILEYEKVEIANINNGARFETYVIAGEAGSGIICLNGAAARCAQAGDKVIIMCYCSLTPEEASEHRPKVVFVNDDNSISNVTEYEKHGTIG</sequence>
<evidence type="ECO:0000255" key="1">
    <source>
        <dbReference type="HAMAP-Rule" id="MF_00446"/>
    </source>
</evidence>
<feature type="chain" id="PRO_0000023063" description="Aspartate 1-decarboxylase beta chain" evidence="1">
    <location>
        <begin position="1"/>
        <end position="24"/>
    </location>
</feature>
<feature type="chain" id="PRO_0000023064" description="Aspartate 1-decarboxylase alpha chain" evidence="1">
    <location>
        <begin position="25"/>
        <end position="127"/>
    </location>
</feature>
<feature type="active site" description="Schiff-base intermediate with substrate; via pyruvic acid" evidence="1">
    <location>
        <position position="25"/>
    </location>
</feature>
<feature type="active site" description="Proton donor" evidence="1">
    <location>
        <position position="58"/>
    </location>
</feature>
<feature type="binding site" evidence="1">
    <location>
        <position position="57"/>
    </location>
    <ligand>
        <name>substrate</name>
    </ligand>
</feature>
<feature type="binding site" evidence="1">
    <location>
        <begin position="73"/>
        <end position="75"/>
    </location>
    <ligand>
        <name>substrate</name>
    </ligand>
</feature>
<feature type="modified residue" description="Pyruvic acid (Ser)" evidence="1">
    <location>
        <position position="25"/>
    </location>
</feature>
<comment type="function">
    <text evidence="1">Catalyzes the pyruvoyl-dependent decarboxylation of aspartate to produce beta-alanine.</text>
</comment>
<comment type="catalytic activity">
    <reaction evidence="1">
        <text>L-aspartate + H(+) = beta-alanine + CO2</text>
        <dbReference type="Rhea" id="RHEA:19497"/>
        <dbReference type="ChEBI" id="CHEBI:15378"/>
        <dbReference type="ChEBI" id="CHEBI:16526"/>
        <dbReference type="ChEBI" id="CHEBI:29991"/>
        <dbReference type="ChEBI" id="CHEBI:57966"/>
        <dbReference type="EC" id="4.1.1.11"/>
    </reaction>
</comment>
<comment type="cofactor">
    <cofactor evidence="1">
        <name>pyruvate</name>
        <dbReference type="ChEBI" id="CHEBI:15361"/>
    </cofactor>
    <text evidence="1">Binds 1 pyruvoyl group covalently per subunit.</text>
</comment>
<comment type="pathway">
    <text evidence="1">Cofactor biosynthesis; (R)-pantothenate biosynthesis; beta-alanine from L-aspartate: step 1/1.</text>
</comment>
<comment type="subunit">
    <text evidence="1">Heterooctamer of four alpha and four beta subunits.</text>
</comment>
<comment type="subcellular location">
    <subcellularLocation>
        <location evidence="1">Cytoplasm</location>
    </subcellularLocation>
</comment>
<comment type="PTM">
    <text evidence="1">Is synthesized initially as an inactive proenzyme, which is activated by self-cleavage at a specific serine bond to produce a beta-subunit with a hydroxyl group at its C-terminus and an alpha-subunit with a pyruvoyl group at its N-terminus.</text>
</comment>
<comment type="similarity">
    <text evidence="1">Belongs to the PanD family.</text>
</comment>
<protein>
    <recommendedName>
        <fullName evidence="1">Aspartate 1-decarboxylase</fullName>
        <ecNumber evidence="1">4.1.1.11</ecNumber>
    </recommendedName>
    <alternativeName>
        <fullName evidence="1">Aspartate alpha-decarboxylase</fullName>
    </alternativeName>
    <component>
        <recommendedName>
            <fullName evidence="1">Aspartate 1-decarboxylase beta chain</fullName>
        </recommendedName>
    </component>
    <component>
        <recommendedName>
            <fullName evidence="1">Aspartate 1-decarboxylase alpha chain</fullName>
        </recommendedName>
    </component>
</protein>
<proteinExistence type="inferred from homology"/>
<keyword id="KW-0068">Autocatalytic cleavage</keyword>
<keyword id="KW-0963">Cytoplasm</keyword>
<keyword id="KW-0210">Decarboxylase</keyword>
<keyword id="KW-0456">Lyase</keyword>
<keyword id="KW-0566">Pantothenate biosynthesis</keyword>
<keyword id="KW-0670">Pyruvate</keyword>
<keyword id="KW-1185">Reference proteome</keyword>
<keyword id="KW-0704">Schiff base</keyword>
<keyword id="KW-0865">Zymogen</keyword>
<reference key="1">
    <citation type="journal article" date="2001" name="J. Bacteriol.">
        <title>Genome sequence and comparative analysis of the solvent-producing bacterium Clostridium acetobutylicum.</title>
        <authorList>
            <person name="Noelling J."/>
            <person name="Breton G."/>
            <person name="Omelchenko M.V."/>
            <person name="Makarova K.S."/>
            <person name="Zeng Q."/>
            <person name="Gibson R."/>
            <person name="Lee H.M."/>
            <person name="Dubois J."/>
            <person name="Qiu D."/>
            <person name="Hitti J."/>
            <person name="Wolf Y.I."/>
            <person name="Tatusov R.L."/>
            <person name="Sabathe F."/>
            <person name="Doucette-Stamm L.A."/>
            <person name="Soucaille P."/>
            <person name="Daly M.J."/>
            <person name="Bennett G.N."/>
            <person name="Koonin E.V."/>
            <person name="Smith D.R."/>
        </authorList>
    </citation>
    <scope>NUCLEOTIDE SEQUENCE [LARGE SCALE GENOMIC DNA]</scope>
    <source>
        <strain>ATCC 824 / DSM 792 / JCM 1419 / IAM 19013 / LMG 5710 / NBRC 13948 / NRRL B-527 / VKM B-1787 / 2291 / W</strain>
    </source>
</reference>